<evidence type="ECO:0000255" key="1">
    <source>
        <dbReference type="HAMAP-Rule" id="MF_01315"/>
    </source>
</evidence>
<evidence type="ECO:0000256" key="2">
    <source>
        <dbReference type="SAM" id="MobiDB-lite"/>
    </source>
</evidence>
<evidence type="ECO:0000305" key="3"/>
<gene>
    <name evidence="1" type="primary">rpsM</name>
    <name type="ordered locus">Mvan_1433</name>
</gene>
<protein>
    <recommendedName>
        <fullName evidence="1">Small ribosomal subunit protein uS13</fullName>
    </recommendedName>
    <alternativeName>
        <fullName evidence="3">30S ribosomal protein S13</fullName>
    </alternativeName>
</protein>
<sequence length="124" mass="14352">MARLMGVDLPRDKRMEIALTYIYGIGRTRSQEILEATGISRDMRTKDLTDDQVTQLRDYIEGNLKVEGDLRREVQADIRRKIEIGCYQGLRHRRGLPVRGQRTKTNARTRKGPKRTIAGKKKAR</sequence>
<dbReference type="EMBL" id="CP000511">
    <property type="protein sequence ID" value="ABM12267.1"/>
    <property type="molecule type" value="Genomic_DNA"/>
</dbReference>
<dbReference type="RefSeq" id="WP_003929501.1">
    <property type="nucleotide sequence ID" value="NZ_JACKSD010000066.1"/>
</dbReference>
<dbReference type="SMR" id="A1T517"/>
<dbReference type="STRING" id="350058.Mvan_1433"/>
<dbReference type="KEGG" id="mva:Mvan_1433"/>
<dbReference type="eggNOG" id="COG0099">
    <property type="taxonomic scope" value="Bacteria"/>
</dbReference>
<dbReference type="HOGENOM" id="CLU_103849_1_2_11"/>
<dbReference type="Proteomes" id="UP000009159">
    <property type="component" value="Chromosome"/>
</dbReference>
<dbReference type="GO" id="GO:0005829">
    <property type="term" value="C:cytosol"/>
    <property type="evidence" value="ECO:0007669"/>
    <property type="project" value="TreeGrafter"/>
</dbReference>
<dbReference type="GO" id="GO:0015935">
    <property type="term" value="C:small ribosomal subunit"/>
    <property type="evidence" value="ECO:0007669"/>
    <property type="project" value="TreeGrafter"/>
</dbReference>
<dbReference type="GO" id="GO:0019843">
    <property type="term" value="F:rRNA binding"/>
    <property type="evidence" value="ECO:0007669"/>
    <property type="project" value="UniProtKB-UniRule"/>
</dbReference>
<dbReference type="GO" id="GO:0003735">
    <property type="term" value="F:structural constituent of ribosome"/>
    <property type="evidence" value="ECO:0007669"/>
    <property type="project" value="InterPro"/>
</dbReference>
<dbReference type="GO" id="GO:0000049">
    <property type="term" value="F:tRNA binding"/>
    <property type="evidence" value="ECO:0007669"/>
    <property type="project" value="UniProtKB-UniRule"/>
</dbReference>
<dbReference type="GO" id="GO:0006412">
    <property type="term" value="P:translation"/>
    <property type="evidence" value="ECO:0007669"/>
    <property type="project" value="UniProtKB-UniRule"/>
</dbReference>
<dbReference type="FunFam" id="1.10.8.50:FF:000001">
    <property type="entry name" value="30S ribosomal protein S13"/>
    <property type="match status" value="1"/>
</dbReference>
<dbReference type="FunFam" id="4.10.910.10:FF:000001">
    <property type="entry name" value="30S ribosomal protein S13"/>
    <property type="match status" value="1"/>
</dbReference>
<dbReference type="Gene3D" id="1.10.8.50">
    <property type="match status" value="1"/>
</dbReference>
<dbReference type="Gene3D" id="4.10.910.10">
    <property type="entry name" value="30s ribosomal protein s13, domain 2"/>
    <property type="match status" value="1"/>
</dbReference>
<dbReference type="HAMAP" id="MF_01315">
    <property type="entry name" value="Ribosomal_uS13"/>
    <property type="match status" value="1"/>
</dbReference>
<dbReference type="InterPro" id="IPR027437">
    <property type="entry name" value="Rbsml_uS13_C"/>
</dbReference>
<dbReference type="InterPro" id="IPR001892">
    <property type="entry name" value="Ribosomal_uS13"/>
</dbReference>
<dbReference type="InterPro" id="IPR010979">
    <property type="entry name" value="Ribosomal_uS13-like_H2TH"/>
</dbReference>
<dbReference type="InterPro" id="IPR019980">
    <property type="entry name" value="Ribosomal_uS13_bac-type"/>
</dbReference>
<dbReference type="InterPro" id="IPR018269">
    <property type="entry name" value="Ribosomal_uS13_CS"/>
</dbReference>
<dbReference type="NCBIfam" id="TIGR03631">
    <property type="entry name" value="uS13_bact"/>
    <property type="match status" value="1"/>
</dbReference>
<dbReference type="PANTHER" id="PTHR10871">
    <property type="entry name" value="30S RIBOSOMAL PROTEIN S13/40S RIBOSOMAL PROTEIN S18"/>
    <property type="match status" value="1"/>
</dbReference>
<dbReference type="PANTHER" id="PTHR10871:SF1">
    <property type="entry name" value="SMALL RIBOSOMAL SUBUNIT PROTEIN US13M"/>
    <property type="match status" value="1"/>
</dbReference>
<dbReference type="Pfam" id="PF00416">
    <property type="entry name" value="Ribosomal_S13"/>
    <property type="match status" value="1"/>
</dbReference>
<dbReference type="PIRSF" id="PIRSF002134">
    <property type="entry name" value="Ribosomal_S13"/>
    <property type="match status" value="1"/>
</dbReference>
<dbReference type="SUPFAM" id="SSF46946">
    <property type="entry name" value="S13-like H2TH domain"/>
    <property type="match status" value="1"/>
</dbReference>
<dbReference type="PROSITE" id="PS00646">
    <property type="entry name" value="RIBOSOMAL_S13_1"/>
    <property type="match status" value="1"/>
</dbReference>
<dbReference type="PROSITE" id="PS50159">
    <property type="entry name" value="RIBOSOMAL_S13_2"/>
    <property type="match status" value="1"/>
</dbReference>
<feature type="chain" id="PRO_0000306654" description="Small ribosomal subunit protein uS13">
    <location>
        <begin position="1"/>
        <end position="124"/>
    </location>
</feature>
<feature type="region of interest" description="Disordered" evidence="2">
    <location>
        <begin position="94"/>
        <end position="124"/>
    </location>
</feature>
<accession>A1T517</accession>
<proteinExistence type="inferred from homology"/>
<keyword id="KW-0687">Ribonucleoprotein</keyword>
<keyword id="KW-0689">Ribosomal protein</keyword>
<keyword id="KW-0694">RNA-binding</keyword>
<keyword id="KW-0699">rRNA-binding</keyword>
<keyword id="KW-0820">tRNA-binding</keyword>
<name>RS13_MYCVP</name>
<organism>
    <name type="scientific">Mycolicibacterium vanbaalenii (strain DSM 7251 / JCM 13017 / BCRC 16820 / KCTC 9966 / NRRL B-24157 / PYR-1)</name>
    <name type="common">Mycobacterium vanbaalenii</name>
    <dbReference type="NCBI Taxonomy" id="350058"/>
    <lineage>
        <taxon>Bacteria</taxon>
        <taxon>Bacillati</taxon>
        <taxon>Actinomycetota</taxon>
        <taxon>Actinomycetes</taxon>
        <taxon>Mycobacteriales</taxon>
        <taxon>Mycobacteriaceae</taxon>
        <taxon>Mycolicibacterium</taxon>
    </lineage>
</organism>
<comment type="function">
    <text evidence="1">Located at the top of the head of the 30S subunit, it contacts several helices of the 16S rRNA. In the 70S ribosome it contacts the 23S rRNA (bridge B1a) and protein L5 of the 50S subunit (bridge B1b), connecting the 2 subunits; these bridges are implicated in subunit movement. Contacts the tRNAs in the A and P-sites.</text>
</comment>
<comment type="subunit">
    <text evidence="1">Part of the 30S ribosomal subunit. Forms a loose heterodimer with protein S19. Forms two bridges to the 50S subunit in the 70S ribosome.</text>
</comment>
<comment type="similarity">
    <text evidence="1">Belongs to the universal ribosomal protein uS13 family.</text>
</comment>
<reference key="1">
    <citation type="submission" date="2006-12" db="EMBL/GenBank/DDBJ databases">
        <title>Complete sequence of Mycobacterium vanbaalenii PYR-1.</title>
        <authorList>
            <consortium name="US DOE Joint Genome Institute"/>
            <person name="Copeland A."/>
            <person name="Lucas S."/>
            <person name="Lapidus A."/>
            <person name="Barry K."/>
            <person name="Detter J.C."/>
            <person name="Glavina del Rio T."/>
            <person name="Hammon N."/>
            <person name="Israni S."/>
            <person name="Dalin E."/>
            <person name="Tice H."/>
            <person name="Pitluck S."/>
            <person name="Singan V."/>
            <person name="Schmutz J."/>
            <person name="Larimer F."/>
            <person name="Land M."/>
            <person name="Hauser L."/>
            <person name="Kyrpides N."/>
            <person name="Anderson I.J."/>
            <person name="Miller C."/>
            <person name="Richardson P."/>
        </authorList>
    </citation>
    <scope>NUCLEOTIDE SEQUENCE [LARGE SCALE GENOMIC DNA]</scope>
    <source>
        <strain>DSM 7251 / JCM 13017 / BCRC 16820 / KCTC 9966 / NRRL B-24157 / PYR-1</strain>
    </source>
</reference>